<gene>
    <name evidence="1" type="primary">atpF</name>
    <name type="ordered locus">RBAM_034010</name>
</gene>
<reference key="1">
    <citation type="journal article" date="2007" name="Nat. Biotechnol.">
        <title>Comparative analysis of the complete genome sequence of the plant growth-promoting bacterium Bacillus amyloliquefaciens FZB42.</title>
        <authorList>
            <person name="Chen X.H."/>
            <person name="Koumoutsi A."/>
            <person name="Scholz R."/>
            <person name="Eisenreich A."/>
            <person name="Schneider K."/>
            <person name="Heinemeyer I."/>
            <person name="Morgenstern B."/>
            <person name="Voss B."/>
            <person name="Hess W.R."/>
            <person name="Reva O."/>
            <person name="Junge H."/>
            <person name="Voigt B."/>
            <person name="Jungblut P.R."/>
            <person name="Vater J."/>
            <person name="Suessmuth R."/>
            <person name="Liesegang H."/>
            <person name="Strittmatter A."/>
            <person name="Gottschalk G."/>
            <person name="Borriss R."/>
        </authorList>
    </citation>
    <scope>NUCLEOTIDE SEQUENCE [LARGE SCALE GENOMIC DNA]</scope>
    <source>
        <strain>DSM 23117 / BGSC 10A6 / LMG 26770 / FZB42</strain>
    </source>
</reference>
<proteinExistence type="inferred from homology"/>
<sequence>MSQLPLELGLSFNGGDILFQLLAMLVLLALLKKFALGPLLNIMKQREDHIAGEITSAEERNKEAQKLIEEQRVLLKEAKQESQSLIENAKKLGEKQKEDIIQAARAESERLKEAARTEIVKEKEQAVSALREQVASLSVLIASKVIEKELDEQAQEQLIQDYLKEVGESR</sequence>
<accession>A7Z9Q4</accession>
<feature type="chain" id="PRO_0000368321" description="ATP synthase subunit b">
    <location>
        <begin position="1"/>
        <end position="170"/>
    </location>
</feature>
<feature type="transmembrane region" description="Helical" evidence="1">
    <location>
        <begin position="20"/>
        <end position="42"/>
    </location>
</feature>
<evidence type="ECO:0000255" key="1">
    <source>
        <dbReference type="HAMAP-Rule" id="MF_01398"/>
    </source>
</evidence>
<comment type="function">
    <text evidence="1">F(1)F(0) ATP synthase produces ATP from ADP in the presence of a proton or sodium gradient. F-type ATPases consist of two structural domains, F(1) containing the extramembraneous catalytic core and F(0) containing the membrane proton channel, linked together by a central stalk and a peripheral stalk. During catalysis, ATP synthesis in the catalytic domain of F(1) is coupled via a rotary mechanism of the central stalk subunits to proton translocation.</text>
</comment>
<comment type="function">
    <text evidence="1">Component of the F(0) channel, it forms part of the peripheral stalk, linking F(1) to F(0).</text>
</comment>
<comment type="subunit">
    <text evidence="1">F-type ATPases have 2 components, F(1) - the catalytic core - and F(0) - the membrane proton channel. F(1) has five subunits: alpha(3), beta(3), gamma(1), delta(1), epsilon(1). F(0) has three main subunits: a(1), b(2) and c(10-14). The alpha and beta chains form an alternating ring which encloses part of the gamma chain. F(1) is attached to F(0) by a central stalk formed by the gamma and epsilon chains, while a peripheral stalk is formed by the delta and b chains.</text>
</comment>
<comment type="subcellular location">
    <subcellularLocation>
        <location evidence="1">Cell membrane</location>
        <topology evidence="1">Single-pass membrane protein</topology>
    </subcellularLocation>
</comment>
<comment type="similarity">
    <text evidence="1">Belongs to the ATPase B chain family.</text>
</comment>
<keyword id="KW-0066">ATP synthesis</keyword>
<keyword id="KW-1003">Cell membrane</keyword>
<keyword id="KW-0138">CF(0)</keyword>
<keyword id="KW-0375">Hydrogen ion transport</keyword>
<keyword id="KW-0406">Ion transport</keyword>
<keyword id="KW-0472">Membrane</keyword>
<keyword id="KW-0812">Transmembrane</keyword>
<keyword id="KW-1133">Transmembrane helix</keyword>
<keyword id="KW-0813">Transport</keyword>
<organism>
    <name type="scientific">Bacillus velezensis (strain DSM 23117 / BGSC 10A6 / LMG 26770 / FZB42)</name>
    <name type="common">Bacillus amyloliquefaciens subsp. plantarum</name>
    <dbReference type="NCBI Taxonomy" id="326423"/>
    <lineage>
        <taxon>Bacteria</taxon>
        <taxon>Bacillati</taxon>
        <taxon>Bacillota</taxon>
        <taxon>Bacilli</taxon>
        <taxon>Bacillales</taxon>
        <taxon>Bacillaceae</taxon>
        <taxon>Bacillus</taxon>
        <taxon>Bacillus amyloliquefaciens group</taxon>
    </lineage>
</organism>
<protein>
    <recommendedName>
        <fullName evidence="1">ATP synthase subunit b</fullName>
    </recommendedName>
    <alternativeName>
        <fullName evidence="1">ATP synthase F(0) sector subunit b</fullName>
    </alternativeName>
    <alternativeName>
        <fullName evidence="1">ATPase subunit I</fullName>
    </alternativeName>
    <alternativeName>
        <fullName evidence="1">F-type ATPase subunit b</fullName>
        <shortName evidence="1">F-ATPase subunit b</shortName>
    </alternativeName>
</protein>
<name>ATPF_BACVZ</name>
<dbReference type="EMBL" id="CP000560">
    <property type="protein sequence ID" value="ABS75730.1"/>
    <property type="molecule type" value="Genomic_DNA"/>
</dbReference>
<dbReference type="RefSeq" id="WP_003151168.1">
    <property type="nucleotide sequence ID" value="NC_009725.2"/>
</dbReference>
<dbReference type="SMR" id="A7Z9Q4"/>
<dbReference type="GeneID" id="93082545"/>
<dbReference type="KEGG" id="bay:RBAM_034010"/>
<dbReference type="HOGENOM" id="CLU_079215_4_2_9"/>
<dbReference type="Proteomes" id="UP000001120">
    <property type="component" value="Chromosome"/>
</dbReference>
<dbReference type="GO" id="GO:0005886">
    <property type="term" value="C:plasma membrane"/>
    <property type="evidence" value="ECO:0007669"/>
    <property type="project" value="UniProtKB-SubCell"/>
</dbReference>
<dbReference type="GO" id="GO:0045259">
    <property type="term" value="C:proton-transporting ATP synthase complex"/>
    <property type="evidence" value="ECO:0007669"/>
    <property type="project" value="UniProtKB-KW"/>
</dbReference>
<dbReference type="GO" id="GO:0046933">
    <property type="term" value="F:proton-transporting ATP synthase activity, rotational mechanism"/>
    <property type="evidence" value="ECO:0007669"/>
    <property type="project" value="UniProtKB-UniRule"/>
</dbReference>
<dbReference type="GO" id="GO:0046961">
    <property type="term" value="F:proton-transporting ATPase activity, rotational mechanism"/>
    <property type="evidence" value="ECO:0007669"/>
    <property type="project" value="TreeGrafter"/>
</dbReference>
<dbReference type="CDD" id="cd06503">
    <property type="entry name" value="ATP-synt_Fo_b"/>
    <property type="match status" value="1"/>
</dbReference>
<dbReference type="Gene3D" id="1.20.5.620">
    <property type="entry name" value="F1F0 ATP synthase subunit B, membrane domain"/>
    <property type="match status" value="1"/>
</dbReference>
<dbReference type="HAMAP" id="MF_01398">
    <property type="entry name" value="ATP_synth_b_bprime"/>
    <property type="match status" value="1"/>
</dbReference>
<dbReference type="InterPro" id="IPR028987">
    <property type="entry name" value="ATP_synth_B-like_membr_sf"/>
</dbReference>
<dbReference type="InterPro" id="IPR002146">
    <property type="entry name" value="ATP_synth_b/b'su_bac/chlpt"/>
</dbReference>
<dbReference type="InterPro" id="IPR005864">
    <property type="entry name" value="ATP_synth_F0_bsu_bac"/>
</dbReference>
<dbReference type="InterPro" id="IPR050059">
    <property type="entry name" value="ATP_synthase_B_chain"/>
</dbReference>
<dbReference type="NCBIfam" id="TIGR01144">
    <property type="entry name" value="ATP_synt_b"/>
    <property type="match status" value="1"/>
</dbReference>
<dbReference type="PANTHER" id="PTHR33445:SF1">
    <property type="entry name" value="ATP SYNTHASE SUBUNIT B"/>
    <property type="match status" value="1"/>
</dbReference>
<dbReference type="PANTHER" id="PTHR33445">
    <property type="entry name" value="ATP SYNTHASE SUBUNIT B', CHLOROPLASTIC"/>
    <property type="match status" value="1"/>
</dbReference>
<dbReference type="Pfam" id="PF00430">
    <property type="entry name" value="ATP-synt_B"/>
    <property type="match status" value="1"/>
</dbReference>
<dbReference type="SUPFAM" id="SSF81573">
    <property type="entry name" value="F1F0 ATP synthase subunit B, membrane domain"/>
    <property type="match status" value="1"/>
</dbReference>